<gene>
    <name evidence="1" type="primary">rplN</name>
    <name type="ordered locus">MPN_175</name>
    <name type="ORF">MP656</name>
</gene>
<reference key="1">
    <citation type="journal article" date="1996" name="Nucleic Acids Res.">
        <title>Sequence analysis of 56 kb from the genome of the bacterium Mycoplasma pneumoniae comprising the dnaA region, the atp operon and a cluster of ribosomal protein genes.</title>
        <authorList>
            <person name="Hilbert H."/>
            <person name="Himmelreich R."/>
            <person name="Plagens H."/>
            <person name="Herrmann R."/>
        </authorList>
    </citation>
    <scope>NUCLEOTIDE SEQUENCE [GENOMIC DNA]</scope>
    <source>
        <strain>ATCC 29342 / M129 / Subtype 1</strain>
    </source>
</reference>
<reference key="2">
    <citation type="journal article" date="1996" name="Nucleic Acids Res.">
        <title>Complete sequence analysis of the genome of the bacterium Mycoplasma pneumoniae.</title>
        <authorList>
            <person name="Himmelreich R."/>
            <person name="Hilbert H."/>
            <person name="Plagens H."/>
            <person name="Pirkl E."/>
            <person name="Li B.-C."/>
            <person name="Herrmann R."/>
        </authorList>
    </citation>
    <scope>NUCLEOTIDE SEQUENCE [LARGE SCALE GENOMIC DNA]</scope>
    <source>
        <strain>ATCC 29342 / M129 / Subtype 1</strain>
    </source>
</reference>
<sequence>MVSFMTRLNVADNTGAKQVGIIKVLGSTRKRYAFLGDVVVVSVKDAIPSGMVKKGQVLRAVIVRTKKGQQRKDGTHLKFDDNACVLIKEDKSPRGTRIFGPVARELRERGYNKILSLAVEVV</sequence>
<comment type="function">
    <text evidence="1">Binds to 23S rRNA. Forms part of two intersubunit bridges in the 70S ribosome.</text>
</comment>
<comment type="subunit">
    <text evidence="1">Part of the 50S ribosomal subunit. Forms a cluster with proteins L3 and L19. In the 70S ribosome, L14 and L19 interact and together make contacts with the 16S rRNA in bridges B5 and B8.</text>
</comment>
<comment type="similarity">
    <text evidence="1">Belongs to the universal ribosomal protein uL14 family.</text>
</comment>
<feature type="chain" id="PRO_0000128553" description="Large ribosomal subunit protein uL14">
    <location>
        <begin position="1"/>
        <end position="122"/>
    </location>
</feature>
<feature type="strand" evidence="4">
    <location>
        <begin position="7"/>
        <end position="10"/>
    </location>
</feature>
<feature type="strand" evidence="4">
    <location>
        <begin position="12"/>
        <end position="23"/>
    </location>
</feature>
<feature type="strand" evidence="4">
    <location>
        <begin position="38"/>
        <end position="46"/>
    </location>
</feature>
<feature type="strand" evidence="3">
    <location>
        <begin position="48"/>
        <end position="52"/>
    </location>
</feature>
<feature type="strand" evidence="4">
    <location>
        <begin position="57"/>
        <end position="64"/>
    </location>
</feature>
<feature type="strand" evidence="4">
    <location>
        <begin position="76"/>
        <end position="78"/>
    </location>
</feature>
<feature type="strand" evidence="4">
    <location>
        <begin position="83"/>
        <end position="87"/>
    </location>
</feature>
<feature type="turn" evidence="3">
    <location>
        <begin position="89"/>
        <end position="91"/>
    </location>
</feature>
<feature type="strand" evidence="4">
    <location>
        <begin position="93"/>
        <end position="96"/>
    </location>
</feature>
<feature type="strand" evidence="4">
    <location>
        <begin position="102"/>
        <end position="104"/>
    </location>
</feature>
<feature type="helix" evidence="4">
    <location>
        <begin position="105"/>
        <end position="108"/>
    </location>
</feature>
<feature type="helix" evidence="4">
    <location>
        <begin position="112"/>
        <end position="116"/>
    </location>
</feature>
<name>RL14_MYCPN</name>
<organism>
    <name type="scientific">Mycoplasma pneumoniae (strain ATCC 29342 / M129 / Subtype 1)</name>
    <name type="common">Mycoplasmoides pneumoniae</name>
    <dbReference type="NCBI Taxonomy" id="272634"/>
    <lineage>
        <taxon>Bacteria</taxon>
        <taxon>Bacillati</taxon>
        <taxon>Mycoplasmatota</taxon>
        <taxon>Mycoplasmoidales</taxon>
        <taxon>Mycoplasmoidaceae</taxon>
        <taxon>Mycoplasmoides</taxon>
    </lineage>
</organism>
<dbReference type="EMBL" id="U34795">
    <property type="protein sequence ID" value="AAC43706.1"/>
    <property type="molecule type" value="Genomic_DNA"/>
</dbReference>
<dbReference type="EMBL" id="U00089">
    <property type="protein sequence ID" value="AAB96304.1"/>
    <property type="molecule type" value="Genomic_DNA"/>
</dbReference>
<dbReference type="PIR" id="S62831">
    <property type="entry name" value="S62831"/>
</dbReference>
<dbReference type="RefSeq" id="NP_109863.1">
    <property type="nucleotide sequence ID" value="NC_000912.1"/>
</dbReference>
<dbReference type="RefSeq" id="WP_010874532.1">
    <property type="nucleotide sequence ID" value="NZ_OU342337.1"/>
</dbReference>
<dbReference type="PDB" id="7OOD">
    <property type="method" value="EM"/>
    <property type="resolution" value="3.40 A"/>
    <property type="chains" value="j=1-122"/>
</dbReference>
<dbReference type="PDB" id="7P6Z">
    <property type="method" value="EM"/>
    <property type="resolution" value="3.50 A"/>
    <property type="chains" value="j=1-122"/>
</dbReference>
<dbReference type="PDB" id="7PAH">
    <property type="method" value="EM"/>
    <property type="resolution" value="9.50 A"/>
    <property type="chains" value="j=1-122"/>
</dbReference>
<dbReference type="PDB" id="7PAI">
    <property type="method" value="EM"/>
    <property type="resolution" value="6.70 A"/>
    <property type="chains" value="j=1-122"/>
</dbReference>
<dbReference type="PDB" id="7PAJ">
    <property type="method" value="EM"/>
    <property type="resolution" value="7.30 A"/>
    <property type="chains" value="j=1-122"/>
</dbReference>
<dbReference type="PDB" id="7PAK">
    <property type="method" value="EM"/>
    <property type="resolution" value="5.30 A"/>
    <property type="chains" value="j=1-122"/>
</dbReference>
<dbReference type="PDB" id="7PAL">
    <property type="method" value="EM"/>
    <property type="resolution" value="4.70 A"/>
    <property type="chains" value="j=1-122"/>
</dbReference>
<dbReference type="PDB" id="7PAM">
    <property type="method" value="EM"/>
    <property type="resolution" value="6.80 A"/>
    <property type="chains" value="j=1-122"/>
</dbReference>
<dbReference type="PDB" id="7PAN">
    <property type="method" value="EM"/>
    <property type="resolution" value="9.70 A"/>
    <property type="chains" value="j=1-122"/>
</dbReference>
<dbReference type="PDB" id="7PAO">
    <property type="method" value="EM"/>
    <property type="resolution" value="7.00 A"/>
    <property type="chains" value="j=1-122"/>
</dbReference>
<dbReference type="PDB" id="7PAQ">
    <property type="method" value="EM"/>
    <property type="resolution" value="8.90 A"/>
    <property type="chains" value="j=1-122"/>
</dbReference>
<dbReference type="PDB" id="7PAR">
    <property type="method" value="EM"/>
    <property type="resolution" value="8.20 A"/>
    <property type="chains" value="j=1-122"/>
</dbReference>
<dbReference type="PDB" id="7PAS">
    <property type="method" value="EM"/>
    <property type="resolution" value="16.00 A"/>
    <property type="chains" value="j=1-122"/>
</dbReference>
<dbReference type="PDB" id="7PAT">
    <property type="method" value="EM"/>
    <property type="resolution" value="9.20 A"/>
    <property type="chains" value="j=1-122"/>
</dbReference>
<dbReference type="PDB" id="7PAU">
    <property type="method" value="EM"/>
    <property type="resolution" value="8.30 A"/>
    <property type="chains" value="j=1-122"/>
</dbReference>
<dbReference type="PDB" id="7PH9">
    <property type="method" value="EM"/>
    <property type="resolution" value="8.70 A"/>
    <property type="chains" value="j=1-122"/>
</dbReference>
<dbReference type="PDB" id="7PHA">
    <property type="method" value="EM"/>
    <property type="resolution" value="8.50 A"/>
    <property type="chains" value="j=1-122"/>
</dbReference>
<dbReference type="PDB" id="7PHB">
    <property type="method" value="EM"/>
    <property type="resolution" value="4.90 A"/>
    <property type="chains" value="j=1-122"/>
</dbReference>
<dbReference type="PDB" id="7PHC">
    <property type="method" value="EM"/>
    <property type="resolution" value="9.90 A"/>
    <property type="chains" value="j=1-122"/>
</dbReference>
<dbReference type="PDB" id="7PI8">
    <property type="method" value="EM"/>
    <property type="resolution" value="8.90 A"/>
    <property type="chains" value="j=1-122"/>
</dbReference>
<dbReference type="PDB" id="7PI9">
    <property type="method" value="EM"/>
    <property type="resolution" value="6.30 A"/>
    <property type="chains" value="j=1-122"/>
</dbReference>
<dbReference type="PDB" id="7PIA">
    <property type="method" value="EM"/>
    <property type="resolution" value="13.60 A"/>
    <property type="chains" value="j=1-122"/>
</dbReference>
<dbReference type="PDB" id="7PIB">
    <property type="method" value="EM"/>
    <property type="resolution" value="4.70 A"/>
    <property type="chains" value="j=1-122"/>
</dbReference>
<dbReference type="PDB" id="7PIC">
    <property type="method" value="EM"/>
    <property type="resolution" value="9.10 A"/>
    <property type="chains" value="j=1-122"/>
</dbReference>
<dbReference type="PDB" id="7PIO">
    <property type="method" value="EM"/>
    <property type="resolution" value="9.50 A"/>
    <property type="chains" value="j=1-122"/>
</dbReference>
<dbReference type="PDB" id="7PIP">
    <property type="method" value="EM"/>
    <property type="resolution" value="9.30 A"/>
    <property type="chains" value="j=1-122"/>
</dbReference>
<dbReference type="PDB" id="7PIQ">
    <property type="method" value="EM"/>
    <property type="resolution" value="9.70 A"/>
    <property type="chains" value="j=1-122"/>
</dbReference>
<dbReference type="PDB" id="7PIR">
    <property type="method" value="EM"/>
    <property type="resolution" value="12.10 A"/>
    <property type="chains" value="j=1-122"/>
</dbReference>
<dbReference type="PDB" id="7PIS">
    <property type="method" value="EM"/>
    <property type="resolution" value="15.00 A"/>
    <property type="chains" value="j=1-122"/>
</dbReference>
<dbReference type="PDB" id="7PIT">
    <property type="method" value="EM"/>
    <property type="resolution" value="5.70 A"/>
    <property type="chains" value="j=1-122"/>
</dbReference>
<dbReference type="PDB" id="8P7X">
    <property type="method" value="EM"/>
    <property type="resolution" value="3.03 A"/>
    <property type="chains" value="j=1-122"/>
</dbReference>
<dbReference type="PDB" id="8P7Y">
    <property type="method" value="EM"/>
    <property type="resolution" value="3.70 A"/>
    <property type="chains" value="j=1-122"/>
</dbReference>
<dbReference type="PDB" id="8P8B">
    <property type="method" value="EM"/>
    <property type="resolution" value="2.90 A"/>
    <property type="chains" value="j=1-122"/>
</dbReference>
<dbReference type="PDB" id="8P8V">
    <property type="method" value="EM"/>
    <property type="resolution" value="8.70 A"/>
    <property type="chains" value="j=1-122"/>
</dbReference>
<dbReference type="PDB" id="8P8W">
    <property type="method" value="EM"/>
    <property type="resolution" value="8.70 A"/>
    <property type="chains" value="j=1-122"/>
</dbReference>
<dbReference type="PDBsum" id="7OOD"/>
<dbReference type="PDBsum" id="7P6Z"/>
<dbReference type="PDBsum" id="7PAH"/>
<dbReference type="PDBsum" id="7PAI"/>
<dbReference type="PDBsum" id="7PAJ"/>
<dbReference type="PDBsum" id="7PAK"/>
<dbReference type="PDBsum" id="7PAL"/>
<dbReference type="PDBsum" id="7PAM"/>
<dbReference type="PDBsum" id="7PAN"/>
<dbReference type="PDBsum" id="7PAO"/>
<dbReference type="PDBsum" id="7PAQ"/>
<dbReference type="PDBsum" id="7PAR"/>
<dbReference type="PDBsum" id="7PAS"/>
<dbReference type="PDBsum" id="7PAT"/>
<dbReference type="PDBsum" id="7PAU"/>
<dbReference type="PDBsum" id="7PH9"/>
<dbReference type="PDBsum" id="7PHA"/>
<dbReference type="PDBsum" id="7PHB"/>
<dbReference type="PDBsum" id="7PHC"/>
<dbReference type="PDBsum" id="7PI8"/>
<dbReference type="PDBsum" id="7PI9"/>
<dbReference type="PDBsum" id="7PIA"/>
<dbReference type="PDBsum" id="7PIB"/>
<dbReference type="PDBsum" id="7PIC"/>
<dbReference type="PDBsum" id="7PIO"/>
<dbReference type="PDBsum" id="7PIP"/>
<dbReference type="PDBsum" id="7PIQ"/>
<dbReference type="PDBsum" id="7PIR"/>
<dbReference type="PDBsum" id="7PIS"/>
<dbReference type="PDBsum" id="7PIT"/>
<dbReference type="PDBsum" id="8P7X"/>
<dbReference type="PDBsum" id="8P7Y"/>
<dbReference type="PDBsum" id="8P8B"/>
<dbReference type="PDBsum" id="8P8V"/>
<dbReference type="PDBsum" id="8P8W"/>
<dbReference type="EMDB" id="EMD-13234"/>
<dbReference type="EMDB" id="EMD-13272"/>
<dbReference type="EMDB" id="EMD-13273"/>
<dbReference type="EMDB" id="EMD-13274"/>
<dbReference type="EMDB" id="EMD-13275"/>
<dbReference type="EMDB" id="EMD-13276"/>
<dbReference type="EMDB" id="EMD-13277"/>
<dbReference type="EMDB" id="EMD-13278"/>
<dbReference type="EMDB" id="EMD-13279"/>
<dbReference type="EMDB" id="EMD-13280"/>
<dbReference type="EMDB" id="EMD-13281"/>
<dbReference type="EMDB" id="EMD-13282"/>
<dbReference type="EMDB" id="EMD-13285"/>
<dbReference type="EMDB" id="EMD-13286"/>
<dbReference type="EMDB" id="EMD-13410"/>
<dbReference type="EMDB" id="EMD-13411"/>
<dbReference type="EMDB" id="EMD-13412"/>
<dbReference type="EMDB" id="EMD-13413"/>
<dbReference type="EMDB" id="EMD-13432"/>
<dbReference type="EMDB" id="EMD-13433"/>
<dbReference type="EMDB" id="EMD-13434"/>
<dbReference type="EMDB" id="EMD-13435"/>
<dbReference type="EMDB" id="EMD-13436"/>
<dbReference type="EMDB" id="EMD-13445"/>
<dbReference type="EMDB" id="EMD-13446"/>
<dbReference type="EMDB" id="EMD-13447"/>
<dbReference type="EMDB" id="EMD-13448"/>
<dbReference type="EMDB" id="EMD-13449"/>
<dbReference type="EMDB" id="EMD-13450"/>
<dbReference type="SMR" id="Q50308"/>
<dbReference type="STRING" id="272634.MPN_175"/>
<dbReference type="EnsemblBacteria" id="AAB96304">
    <property type="protein sequence ID" value="AAB96304"/>
    <property type="gene ID" value="MPN_175"/>
</dbReference>
<dbReference type="GeneID" id="66609177"/>
<dbReference type="KEGG" id="mpn:MPN_175"/>
<dbReference type="PATRIC" id="fig|272634.6.peg.193"/>
<dbReference type="HOGENOM" id="CLU_095071_2_1_14"/>
<dbReference type="OrthoDB" id="9806379at2"/>
<dbReference type="BioCyc" id="MPNE272634:G1GJ3-286-MONOMER"/>
<dbReference type="Proteomes" id="UP000000808">
    <property type="component" value="Chromosome"/>
</dbReference>
<dbReference type="GO" id="GO:0022625">
    <property type="term" value="C:cytosolic large ribosomal subunit"/>
    <property type="evidence" value="ECO:0007669"/>
    <property type="project" value="TreeGrafter"/>
</dbReference>
<dbReference type="GO" id="GO:0070180">
    <property type="term" value="F:large ribosomal subunit rRNA binding"/>
    <property type="evidence" value="ECO:0007669"/>
    <property type="project" value="TreeGrafter"/>
</dbReference>
<dbReference type="GO" id="GO:0003735">
    <property type="term" value="F:structural constituent of ribosome"/>
    <property type="evidence" value="ECO:0007669"/>
    <property type="project" value="InterPro"/>
</dbReference>
<dbReference type="GO" id="GO:0006412">
    <property type="term" value="P:translation"/>
    <property type="evidence" value="ECO:0007669"/>
    <property type="project" value="UniProtKB-UniRule"/>
</dbReference>
<dbReference type="CDD" id="cd00337">
    <property type="entry name" value="Ribosomal_uL14"/>
    <property type="match status" value="1"/>
</dbReference>
<dbReference type="FunFam" id="2.40.150.20:FF:000005">
    <property type="entry name" value="50S ribosomal protein L14"/>
    <property type="match status" value="1"/>
</dbReference>
<dbReference type="Gene3D" id="2.40.150.20">
    <property type="entry name" value="Ribosomal protein L14"/>
    <property type="match status" value="1"/>
</dbReference>
<dbReference type="HAMAP" id="MF_01367">
    <property type="entry name" value="Ribosomal_uL14"/>
    <property type="match status" value="1"/>
</dbReference>
<dbReference type="InterPro" id="IPR000218">
    <property type="entry name" value="Ribosomal_uL14"/>
</dbReference>
<dbReference type="InterPro" id="IPR005745">
    <property type="entry name" value="Ribosomal_uL14_bac-type"/>
</dbReference>
<dbReference type="InterPro" id="IPR019972">
    <property type="entry name" value="Ribosomal_uL14_CS"/>
</dbReference>
<dbReference type="InterPro" id="IPR036853">
    <property type="entry name" value="Ribosomal_uL14_sf"/>
</dbReference>
<dbReference type="NCBIfam" id="TIGR01067">
    <property type="entry name" value="rplN_bact"/>
    <property type="match status" value="1"/>
</dbReference>
<dbReference type="PANTHER" id="PTHR11761">
    <property type="entry name" value="50S/60S RIBOSOMAL PROTEIN L14/L23"/>
    <property type="match status" value="1"/>
</dbReference>
<dbReference type="PANTHER" id="PTHR11761:SF3">
    <property type="entry name" value="LARGE RIBOSOMAL SUBUNIT PROTEIN UL14M"/>
    <property type="match status" value="1"/>
</dbReference>
<dbReference type="Pfam" id="PF00238">
    <property type="entry name" value="Ribosomal_L14"/>
    <property type="match status" value="1"/>
</dbReference>
<dbReference type="SMART" id="SM01374">
    <property type="entry name" value="Ribosomal_L14"/>
    <property type="match status" value="1"/>
</dbReference>
<dbReference type="SUPFAM" id="SSF50193">
    <property type="entry name" value="Ribosomal protein L14"/>
    <property type="match status" value="1"/>
</dbReference>
<dbReference type="PROSITE" id="PS00049">
    <property type="entry name" value="RIBOSOMAL_L14"/>
    <property type="match status" value="1"/>
</dbReference>
<protein>
    <recommendedName>
        <fullName evidence="1">Large ribosomal subunit protein uL14</fullName>
    </recommendedName>
    <alternativeName>
        <fullName evidence="2">50S ribosomal protein L14</fullName>
    </alternativeName>
</protein>
<evidence type="ECO:0000255" key="1">
    <source>
        <dbReference type="HAMAP-Rule" id="MF_01367"/>
    </source>
</evidence>
<evidence type="ECO:0000305" key="2"/>
<evidence type="ECO:0007829" key="3">
    <source>
        <dbReference type="PDB" id="7OOD"/>
    </source>
</evidence>
<evidence type="ECO:0007829" key="4">
    <source>
        <dbReference type="PDB" id="8P8B"/>
    </source>
</evidence>
<proteinExistence type="evidence at protein level"/>
<accession>Q50308</accession>
<keyword id="KW-0002">3D-structure</keyword>
<keyword id="KW-1185">Reference proteome</keyword>
<keyword id="KW-0687">Ribonucleoprotein</keyword>
<keyword id="KW-0689">Ribosomal protein</keyword>
<keyword id="KW-0694">RNA-binding</keyword>
<keyword id="KW-0699">rRNA-binding</keyword>